<evidence type="ECO:0000255" key="1">
    <source>
        <dbReference type="HAMAP-Rule" id="MF_00442"/>
    </source>
</evidence>
<feature type="chain" id="PRO_1000124579" description="ATP-dependent DNA helicase Hel308">
    <location>
        <begin position="1"/>
        <end position="756"/>
    </location>
</feature>
<feature type="domain" description="Helicase ATP-binding" evidence="1">
    <location>
        <begin position="34"/>
        <end position="201"/>
    </location>
</feature>
<feature type="domain" description="Helicase C-terminal" evidence="1">
    <location>
        <begin position="233"/>
        <end position="435"/>
    </location>
</feature>
<feature type="short sequence motif" description="DEAH box" evidence="1">
    <location>
        <begin position="146"/>
        <end position="149"/>
    </location>
</feature>
<feature type="binding site" evidence="1">
    <location>
        <position position="29"/>
    </location>
    <ligand>
        <name>ATP</name>
        <dbReference type="ChEBI" id="CHEBI:30616"/>
    </ligand>
</feature>
<feature type="binding site" evidence="1">
    <location>
        <begin position="47"/>
        <end position="54"/>
    </location>
    <ligand>
        <name>ATP</name>
        <dbReference type="ChEBI" id="CHEBI:30616"/>
    </ligand>
</feature>
<protein>
    <recommendedName>
        <fullName evidence="1">ATP-dependent DNA helicase Hel308</fullName>
        <ecNumber evidence="1">5.6.2.4</ecNumber>
    </recommendedName>
    <alternativeName>
        <fullName evidence="1">DNA 3'-5' helicase Hel308</fullName>
    </alternativeName>
</protein>
<sequence length="756" mass="84006">MNIEELPLPSLLRDFLISKRGIRTLYPPQEEAIRAGLLNGENILMVSATASGKTLLAEVAAVNNVLVNDKKSLVAVPLKALAFEKLNDFNTYSELGIRVAASTGDYNSEDKWLGSYDVIITTYEKLDSLLRLKPSWIWNVGQLIIDEIHFINDDERGPIIESIVAKLRMLNLNPQIIGLSATIGNPEELANWLNAKLVKSDWRPVSLREGVYHKGVVTYVNDGEKRISGQGDSLINLTVDTLNDGGQVLVFSSSRQGAVRIARKLAEYICSSPVRYIDPGEAGKLAEEVRETSSSRILAEELTGLIKCGVSFHHAGLELEVRRVIEEGFRRGVLRVLASTTTLAAGVNLPARRVIVNEYRRYEPGYGFIEIPVMEYKQMAGRAGRPGLDPYGEAIIIVSSKDEVDYVIDKYIKSPPEYVKSNFMNPTSLKFHTLSAVASQYAETIDELVKFTSNTFAGFQGKLSAMIQANSVRRMISRIIDELVDYGFIIRNGDKLEATEVGAVVNRMYLDPDTAHVFIMGLRNLNSDADLNAYSLMLVVKSPKIPKVKVRRNELDELAQQAASMWSSIPLKPSDVDELVNYPEDYEDFLSEFKTAMALLEWINESNEDQIMKTYDVQPGDLRVLSDQAEWLIGALQELARTLGLSGNVVNGLRALRYRVKYGVNDELLELVVNLEGVGRVRARALYAAGYRSIEDLAKANVSDLTRIRGIGDKIAGSIIEQAHQLVKDGRVIKFNESTVKGKTRRGGGGLLDHMY</sequence>
<reference key="1">
    <citation type="submission" date="2007-10" db="EMBL/GenBank/DDBJ databases">
        <title>Complete sequence of Caldivirga maquilingensis IC-167.</title>
        <authorList>
            <consortium name="US DOE Joint Genome Institute"/>
            <person name="Copeland A."/>
            <person name="Lucas S."/>
            <person name="Lapidus A."/>
            <person name="Barry K."/>
            <person name="Glavina del Rio T."/>
            <person name="Dalin E."/>
            <person name="Tice H."/>
            <person name="Pitluck S."/>
            <person name="Saunders E."/>
            <person name="Brettin T."/>
            <person name="Bruce D."/>
            <person name="Detter J.C."/>
            <person name="Han C."/>
            <person name="Schmutz J."/>
            <person name="Larimer F."/>
            <person name="Land M."/>
            <person name="Hauser L."/>
            <person name="Kyrpides N."/>
            <person name="Ivanova N."/>
            <person name="Biddle J.F."/>
            <person name="Zhang Z."/>
            <person name="Fitz-Gibbon S.T."/>
            <person name="Lowe T.M."/>
            <person name="Saltikov C."/>
            <person name="House C.H."/>
            <person name="Richardson P."/>
        </authorList>
    </citation>
    <scope>NUCLEOTIDE SEQUENCE [LARGE SCALE GENOMIC DNA]</scope>
    <source>
        <strain>ATCC 700844 / DSM 13496 / JCM 10307 / IC-167</strain>
    </source>
</reference>
<keyword id="KW-0067">ATP-binding</keyword>
<keyword id="KW-0227">DNA damage</keyword>
<keyword id="KW-0234">DNA repair</keyword>
<keyword id="KW-0238">DNA-binding</keyword>
<keyword id="KW-0347">Helicase</keyword>
<keyword id="KW-0378">Hydrolase</keyword>
<keyword id="KW-0413">Isomerase</keyword>
<keyword id="KW-0547">Nucleotide-binding</keyword>
<keyword id="KW-1185">Reference proteome</keyword>
<gene>
    <name evidence="1" type="primary">hel308</name>
    <name type="ordered locus">Cmaq_0318</name>
</gene>
<accession>A8MB76</accession>
<comment type="function">
    <text evidence="1">DNA-dependent ATPase and 3'-5' DNA helicase that may be involved in repair of stalled replication forks.</text>
</comment>
<comment type="catalytic activity">
    <reaction evidence="1">
        <text>Couples ATP hydrolysis with the unwinding of duplex DNA by translocating in the 3'-5' direction.</text>
        <dbReference type="EC" id="5.6.2.4"/>
    </reaction>
</comment>
<comment type="catalytic activity">
    <reaction evidence="1">
        <text>ATP + H2O = ADP + phosphate + H(+)</text>
        <dbReference type="Rhea" id="RHEA:13065"/>
        <dbReference type="ChEBI" id="CHEBI:15377"/>
        <dbReference type="ChEBI" id="CHEBI:15378"/>
        <dbReference type="ChEBI" id="CHEBI:30616"/>
        <dbReference type="ChEBI" id="CHEBI:43474"/>
        <dbReference type="ChEBI" id="CHEBI:456216"/>
        <dbReference type="EC" id="5.6.2.4"/>
    </reaction>
</comment>
<comment type="subunit">
    <text evidence="1">Monomer.</text>
</comment>
<comment type="similarity">
    <text evidence="1">Belongs to the helicase family. Hel308 subfamily.</text>
</comment>
<proteinExistence type="inferred from homology"/>
<name>HELS_CALMQ</name>
<organism>
    <name type="scientific">Caldivirga maquilingensis (strain ATCC 700844 / DSM 13496 / JCM 10307 / IC-167)</name>
    <dbReference type="NCBI Taxonomy" id="397948"/>
    <lineage>
        <taxon>Archaea</taxon>
        <taxon>Thermoproteota</taxon>
        <taxon>Thermoprotei</taxon>
        <taxon>Thermoproteales</taxon>
        <taxon>Thermoproteaceae</taxon>
        <taxon>Caldivirga</taxon>
    </lineage>
</organism>
<dbReference type="EC" id="5.6.2.4" evidence="1"/>
<dbReference type="EMBL" id="CP000852">
    <property type="protein sequence ID" value="ABW01166.1"/>
    <property type="molecule type" value="Genomic_DNA"/>
</dbReference>
<dbReference type="RefSeq" id="WP_012185386.1">
    <property type="nucleotide sequence ID" value="NC_009954.1"/>
</dbReference>
<dbReference type="SMR" id="A8MB76"/>
<dbReference type="STRING" id="397948.Cmaq_0318"/>
<dbReference type="GeneID" id="5710426"/>
<dbReference type="KEGG" id="cma:Cmaq_0318"/>
<dbReference type="eggNOG" id="arCOG00553">
    <property type="taxonomic scope" value="Archaea"/>
</dbReference>
<dbReference type="HOGENOM" id="CLU_006553_3_0_2"/>
<dbReference type="OrthoDB" id="371946at2157"/>
<dbReference type="Proteomes" id="UP000001137">
    <property type="component" value="Chromosome"/>
</dbReference>
<dbReference type="GO" id="GO:0043138">
    <property type="term" value="F:3'-5' DNA helicase activity"/>
    <property type="evidence" value="ECO:0007669"/>
    <property type="project" value="UniProtKB-UniRule"/>
</dbReference>
<dbReference type="GO" id="GO:0005524">
    <property type="term" value="F:ATP binding"/>
    <property type="evidence" value="ECO:0007669"/>
    <property type="project" value="UniProtKB-UniRule"/>
</dbReference>
<dbReference type="GO" id="GO:0016887">
    <property type="term" value="F:ATP hydrolysis activity"/>
    <property type="evidence" value="ECO:0007669"/>
    <property type="project" value="RHEA"/>
</dbReference>
<dbReference type="GO" id="GO:0003677">
    <property type="term" value="F:DNA binding"/>
    <property type="evidence" value="ECO:0007669"/>
    <property type="project" value="UniProtKB-UniRule"/>
</dbReference>
<dbReference type="GO" id="GO:0006281">
    <property type="term" value="P:DNA repair"/>
    <property type="evidence" value="ECO:0007669"/>
    <property type="project" value="UniProtKB-UniRule"/>
</dbReference>
<dbReference type="CDD" id="cd18028">
    <property type="entry name" value="DEXHc_archSki2"/>
    <property type="match status" value="1"/>
</dbReference>
<dbReference type="CDD" id="cd18795">
    <property type="entry name" value="SF2_C_Ski2"/>
    <property type="match status" value="1"/>
</dbReference>
<dbReference type="Gene3D" id="1.10.3380.30">
    <property type="match status" value="1"/>
</dbReference>
<dbReference type="Gene3D" id="1.10.150.20">
    <property type="entry name" value="5' to 3' exonuclease, C-terminal subdomain"/>
    <property type="match status" value="1"/>
</dbReference>
<dbReference type="Gene3D" id="3.40.50.300">
    <property type="entry name" value="P-loop containing nucleotide triphosphate hydrolases"/>
    <property type="match status" value="2"/>
</dbReference>
<dbReference type="HAMAP" id="MF_00442">
    <property type="entry name" value="Helicase_Hel308"/>
    <property type="match status" value="1"/>
</dbReference>
<dbReference type="InterPro" id="IPR011545">
    <property type="entry name" value="DEAD/DEAH_box_helicase_dom"/>
</dbReference>
<dbReference type="InterPro" id="IPR048772">
    <property type="entry name" value="Hel308-like_dom4"/>
</dbReference>
<dbReference type="InterPro" id="IPR050474">
    <property type="entry name" value="Hel308_SKI2-like"/>
</dbReference>
<dbReference type="InterPro" id="IPR014001">
    <property type="entry name" value="Helicase_ATP-bd"/>
</dbReference>
<dbReference type="InterPro" id="IPR001650">
    <property type="entry name" value="Helicase_C-like"/>
</dbReference>
<dbReference type="InterPro" id="IPR022965">
    <property type="entry name" value="Helicase_Hel308"/>
</dbReference>
<dbReference type="InterPro" id="IPR003583">
    <property type="entry name" value="Hlx-hairpin-Hlx_DNA-bd_motif"/>
</dbReference>
<dbReference type="InterPro" id="IPR027417">
    <property type="entry name" value="P-loop_NTPase"/>
</dbReference>
<dbReference type="InterPro" id="IPR036390">
    <property type="entry name" value="WH_DNA-bd_sf"/>
</dbReference>
<dbReference type="PANTHER" id="PTHR47961:SF10">
    <property type="entry name" value="ATP-DEPENDENT DNA HELICASE HEL308"/>
    <property type="match status" value="1"/>
</dbReference>
<dbReference type="PANTHER" id="PTHR47961">
    <property type="entry name" value="DNA POLYMERASE THETA, PUTATIVE (AFU_ORTHOLOGUE AFUA_1G05260)-RELATED"/>
    <property type="match status" value="1"/>
</dbReference>
<dbReference type="Pfam" id="PF00270">
    <property type="entry name" value="DEAD"/>
    <property type="match status" value="1"/>
</dbReference>
<dbReference type="Pfam" id="PF00271">
    <property type="entry name" value="Helicase_C"/>
    <property type="match status" value="1"/>
</dbReference>
<dbReference type="Pfam" id="PF21280">
    <property type="entry name" value="Helicase_dom4_arc"/>
    <property type="match status" value="1"/>
</dbReference>
<dbReference type="Pfam" id="PF14520">
    <property type="entry name" value="HHH_5"/>
    <property type="match status" value="1"/>
</dbReference>
<dbReference type="SMART" id="SM00487">
    <property type="entry name" value="DEXDc"/>
    <property type="match status" value="1"/>
</dbReference>
<dbReference type="SMART" id="SM00490">
    <property type="entry name" value="HELICc"/>
    <property type="match status" value="1"/>
</dbReference>
<dbReference type="SMART" id="SM00278">
    <property type="entry name" value="HhH1"/>
    <property type="match status" value="2"/>
</dbReference>
<dbReference type="SUPFAM" id="SSF52540">
    <property type="entry name" value="P-loop containing nucleoside triphosphate hydrolases"/>
    <property type="match status" value="2"/>
</dbReference>
<dbReference type="SUPFAM" id="SSF158702">
    <property type="entry name" value="Sec63 N-terminal domain-like"/>
    <property type="match status" value="1"/>
</dbReference>
<dbReference type="SUPFAM" id="SSF46785">
    <property type="entry name" value="Winged helix' DNA-binding domain"/>
    <property type="match status" value="1"/>
</dbReference>
<dbReference type="PROSITE" id="PS51192">
    <property type="entry name" value="HELICASE_ATP_BIND_1"/>
    <property type="match status" value="1"/>
</dbReference>
<dbReference type="PROSITE" id="PS51194">
    <property type="entry name" value="HELICASE_CTER"/>
    <property type="match status" value="1"/>
</dbReference>